<reference key="1">
    <citation type="journal article" date="2005" name="Proteins">
        <title>A novel strategy for the identification of toxinlike structures in spider venom.</title>
        <authorList>
            <person name="Kozlov S.A."/>
            <person name="Malyavka A."/>
            <person name="McCutchen B."/>
            <person name="Lu A."/>
            <person name="Schepers E."/>
            <person name="Herrmann R."/>
            <person name="Grishin E.V."/>
        </authorList>
    </citation>
    <scope>NUCLEOTIDE SEQUENCE [MRNA]</scope>
    <source>
        <tissue>Venom gland</tissue>
    </source>
</reference>
<evidence type="ECO:0000250" key="1"/>
<evidence type="ECO:0000255" key="2"/>
<evidence type="ECO:0000305" key="3"/>
<feature type="signal peptide" evidence="2">
    <location>
        <begin position="1"/>
        <end position="20"/>
    </location>
</feature>
<feature type="propeptide" id="PRO_5000093623" evidence="2">
    <location>
        <begin position="21"/>
        <end position="34"/>
    </location>
</feature>
<feature type="chain" id="PRO_5000093624" description="U2-agatoxin-Ao1l">
    <location>
        <begin position="35"/>
        <end position="69"/>
    </location>
</feature>
<feature type="modified residue" description="Leucine amide" evidence="1">
    <location>
        <position position="69"/>
    </location>
</feature>
<feature type="disulfide bond" evidence="1">
    <location>
        <begin position="37"/>
        <end position="53"/>
    </location>
</feature>
<feature type="disulfide bond" evidence="1">
    <location>
        <begin position="44"/>
        <end position="58"/>
    </location>
</feature>
<feature type="disulfide bond" evidence="1">
    <location>
        <begin position="52"/>
        <end position="68"/>
    </location>
</feature>
<comment type="function">
    <text evidence="1">Insect active toxin causing rapid but reversible paralysis in crickets. No activity shown in mammals. Does not show effect on mammalian voltage-gated calcium channels (By similarity).</text>
</comment>
<comment type="subcellular location">
    <subcellularLocation>
        <location evidence="1">Secreted</location>
    </subcellularLocation>
</comment>
<comment type="tissue specificity">
    <text>Expressed by the venom gland.</text>
</comment>
<comment type="domain">
    <text evidence="1">The presence of a 'disulfide through disulfide knot' structurally defines this protein as a knottin.</text>
</comment>
<comment type="similarity">
    <text evidence="3">Belongs to the neurotoxin 01 (U2-agtx) family.</text>
</comment>
<keyword id="KW-0027">Amidation</keyword>
<keyword id="KW-1015">Disulfide bond</keyword>
<keyword id="KW-0960">Knottin</keyword>
<keyword id="KW-0528">Neurotoxin</keyword>
<keyword id="KW-0964">Secreted</keyword>
<keyword id="KW-0732">Signal</keyword>
<keyword id="KW-0800">Toxin</keyword>
<organism>
    <name type="scientific">Agelena orientalis</name>
    <name type="common">Funnel-web spider</name>
    <dbReference type="NCBI Taxonomy" id="293813"/>
    <lineage>
        <taxon>Eukaryota</taxon>
        <taxon>Metazoa</taxon>
        <taxon>Ecdysozoa</taxon>
        <taxon>Arthropoda</taxon>
        <taxon>Chelicerata</taxon>
        <taxon>Arachnida</taxon>
        <taxon>Araneae</taxon>
        <taxon>Araneomorphae</taxon>
        <taxon>Entelegynae</taxon>
        <taxon>Agelenidae</taxon>
        <taxon>Agelena</taxon>
    </lineage>
</organism>
<dbReference type="EMBL" id="AY681308">
    <property type="protein sequence ID" value="AAU93666.1"/>
    <property type="molecule type" value="mRNA"/>
</dbReference>
<dbReference type="SMR" id="Q5Y4X4"/>
<dbReference type="ArachnoServer" id="AS000102">
    <property type="toxin name" value="U2-agatoxin-Ao1l"/>
</dbReference>
<dbReference type="GO" id="GO:0005576">
    <property type="term" value="C:extracellular region"/>
    <property type="evidence" value="ECO:0007669"/>
    <property type="project" value="UniProtKB-SubCell"/>
</dbReference>
<dbReference type="GO" id="GO:0090729">
    <property type="term" value="F:toxin activity"/>
    <property type="evidence" value="ECO:0007669"/>
    <property type="project" value="UniProtKB-KW"/>
</dbReference>
<dbReference type="Pfam" id="PF05980">
    <property type="entry name" value="Toxin_7"/>
    <property type="match status" value="1"/>
</dbReference>
<dbReference type="SUPFAM" id="SSF57059">
    <property type="entry name" value="omega toxin-like"/>
    <property type="match status" value="1"/>
</dbReference>
<proteinExistence type="evidence at transcript level"/>
<sequence>MRAIISLLLISAMVFSIIEAVPEEEGLQLSEDERGGCLPHNRFCNALSDPRCCSGLRCKELSIWDSRCLG</sequence>
<name>TAG2L_AGEOR</name>
<protein>
    <recommendedName>
        <fullName>U2-agatoxin-Ao1l</fullName>
        <shortName>U2-AGTX-Ao1l</shortName>
    </recommendedName>
    <alternativeName>
        <fullName>Agel_11</fullName>
    </alternativeName>
</protein>
<accession>Q5Y4X4</accession>